<accession>B3NDH5</accession>
<organism>
    <name type="scientific">Drosophila erecta</name>
    <name type="common">Fruit fly</name>
    <dbReference type="NCBI Taxonomy" id="7220"/>
    <lineage>
        <taxon>Eukaryota</taxon>
        <taxon>Metazoa</taxon>
        <taxon>Ecdysozoa</taxon>
        <taxon>Arthropoda</taxon>
        <taxon>Hexapoda</taxon>
        <taxon>Insecta</taxon>
        <taxon>Pterygota</taxon>
        <taxon>Neoptera</taxon>
        <taxon>Endopterygota</taxon>
        <taxon>Diptera</taxon>
        <taxon>Brachycera</taxon>
        <taxon>Muscomorpha</taxon>
        <taxon>Ephydroidea</taxon>
        <taxon>Drosophilidae</taxon>
        <taxon>Drosophila</taxon>
        <taxon>Sophophora</taxon>
    </lineage>
</organism>
<feature type="chain" id="PRO_0000365964" description="Eukaryotic translation initiation factor 3 subunit E">
    <location>
        <begin position="1"/>
        <end position="435"/>
    </location>
</feature>
<feature type="domain" description="PCI" evidence="3">
    <location>
        <begin position="219"/>
        <end position="392"/>
    </location>
</feature>
<dbReference type="EMBL" id="CH954178">
    <property type="protein sequence ID" value="EDV52037.1"/>
    <property type="molecule type" value="Genomic_DNA"/>
</dbReference>
<dbReference type="SMR" id="B3NDH5"/>
<dbReference type="EnsemblMetazoa" id="FBtr0135904">
    <property type="protein sequence ID" value="FBpp0134396"/>
    <property type="gene ID" value="FBgn0108088"/>
</dbReference>
<dbReference type="EnsemblMetazoa" id="XM_001972975.3">
    <property type="protein sequence ID" value="XP_001973011.1"/>
    <property type="gene ID" value="LOC6543631"/>
</dbReference>
<dbReference type="GeneID" id="6543631"/>
<dbReference type="KEGG" id="der:6543631"/>
<dbReference type="CTD" id="3646"/>
<dbReference type="eggNOG" id="KOG2758">
    <property type="taxonomic scope" value="Eukaryota"/>
</dbReference>
<dbReference type="HOGENOM" id="CLU_031132_0_0_1"/>
<dbReference type="OMA" id="NCPWILR"/>
<dbReference type="OrthoDB" id="417252at2759"/>
<dbReference type="PhylomeDB" id="B3NDH5"/>
<dbReference type="Proteomes" id="UP000008711">
    <property type="component" value="Unassembled WGS sequence"/>
</dbReference>
<dbReference type="GO" id="GO:0016282">
    <property type="term" value="C:eukaryotic 43S preinitiation complex"/>
    <property type="evidence" value="ECO:0007669"/>
    <property type="project" value="UniProtKB-UniRule"/>
</dbReference>
<dbReference type="GO" id="GO:0033290">
    <property type="term" value="C:eukaryotic 48S preinitiation complex"/>
    <property type="evidence" value="ECO:0007669"/>
    <property type="project" value="UniProtKB-UniRule"/>
</dbReference>
<dbReference type="GO" id="GO:0071540">
    <property type="term" value="C:eukaryotic translation initiation factor 3 complex, eIF3e"/>
    <property type="evidence" value="ECO:0007669"/>
    <property type="project" value="UniProtKB-UniRule"/>
</dbReference>
<dbReference type="GO" id="GO:0043231">
    <property type="term" value="C:intracellular membrane-bounded organelle"/>
    <property type="evidence" value="ECO:0007669"/>
    <property type="project" value="EnsemblMetazoa"/>
</dbReference>
<dbReference type="GO" id="GO:0003743">
    <property type="term" value="F:translation initiation factor activity"/>
    <property type="evidence" value="ECO:0007669"/>
    <property type="project" value="UniProtKB-UniRule"/>
</dbReference>
<dbReference type="GO" id="GO:0001732">
    <property type="term" value="P:formation of cytoplasmic translation initiation complex"/>
    <property type="evidence" value="ECO:0007669"/>
    <property type="project" value="UniProtKB-UniRule"/>
</dbReference>
<dbReference type="CDD" id="cd21378">
    <property type="entry name" value="eIF3E"/>
    <property type="match status" value="1"/>
</dbReference>
<dbReference type="HAMAP" id="MF_03004">
    <property type="entry name" value="eIF3e"/>
    <property type="match status" value="1"/>
</dbReference>
<dbReference type="InterPro" id="IPR016650">
    <property type="entry name" value="eIF3e"/>
</dbReference>
<dbReference type="InterPro" id="IPR019010">
    <property type="entry name" value="eIF3e_N"/>
</dbReference>
<dbReference type="InterPro" id="IPR000717">
    <property type="entry name" value="PCI_dom"/>
</dbReference>
<dbReference type="InterPro" id="IPR036390">
    <property type="entry name" value="WH_DNA-bd_sf"/>
</dbReference>
<dbReference type="PANTHER" id="PTHR10317">
    <property type="entry name" value="EUKARYOTIC TRANSLATION INITIATION FACTOR 3 SUBUNIT E"/>
    <property type="match status" value="1"/>
</dbReference>
<dbReference type="Pfam" id="PF09440">
    <property type="entry name" value="eIF3_N"/>
    <property type="match status" value="1"/>
</dbReference>
<dbReference type="Pfam" id="PF01399">
    <property type="entry name" value="PCI"/>
    <property type="match status" value="1"/>
</dbReference>
<dbReference type="PIRSF" id="PIRSF016255">
    <property type="entry name" value="eIF3e_su6"/>
    <property type="match status" value="1"/>
</dbReference>
<dbReference type="SMART" id="SM01186">
    <property type="entry name" value="eIF3_N"/>
    <property type="match status" value="1"/>
</dbReference>
<dbReference type="SMART" id="SM00088">
    <property type="entry name" value="PINT"/>
    <property type="match status" value="1"/>
</dbReference>
<dbReference type="SUPFAM" id="SSF46785">
    <property type="entry name" value="Winged helix' DNA-binding domain"/>
    <property type="match status" value="1"/>
</dbReference>
<dbReference type="PROSITE" id="PS50250">
    <property type="entry name" value="PCI"/>
    <property type="match status" value="1"/>
</dbReference>
<protein>
    <recommendedName>
        <fullName evidence="2">Eukaryotic translation initiation factor 3 subunit E</fullName>
        <shortName evidence="2">eIF3e</shortName>
    </recommendedName>
    <alternativeName>
        <fullName evidence="2">Eukaryotic translation initiation factor 3 subunit 6</fullName>
    </alternativeName>
</protein>
<sequence>MANFDLTRINCQFLDRHLTFPLLEFLCGKEIYNQQELLEYILETVNKTNMIDYTMDTRKRLNLSQEMPEELVQRKAEVLATLKQLQNEVAPIMKATDILKNGESMKDSKTFVNALQKDYNFKVEHLESAYKLAKYLYECGNYQESTSYLYFCLIVMSPNDKNYLNVLWGKLAAEILTLNWNTALEDLTRLRDYIDSANFSTIQALQQRTWLIHWSVLVFFNHPKGRDLIIEMFLYKPLYLNAIQTMCPHIMRYLATAVVINRTRRNALKDLIKVIQQESYTYRDPITEFLECLYVNFDFEGARLKLHECQTVILNDFFIVACLNEFVEDARLMIFETFCRIHQCITISMLADKLNMKPNEAECWIVNLIRNARLNAKIDSKLGHVVMGTQPLSPYQQLVEKIDSLSMRSEHLAGLIERKSKQKQNQESADSWKYY</sequence>
<name>EIF3E_DROER</name>
<comment type="function">
    <text evidence="2">Component of the eukaryotic translation initiation factor 3 (eIF-3) complex, which is involved in protein synthesis of a specialized repertoire of mRNAs and, together with other initiation factors, stimulates binding of mRNA and methionyl-tRNAi to the 40S ribosome. The eIF-3 complex specifically targets and initiates translation of a subset of mRNAs involved in cell proliferation.</text>
</comment>
<comment type="subunit">
    <text evidence="1 2">Component of the eukaryotic translation initiation factor 3 (eIF-3) complex. The eIF-3 complex interacts with pix. Interacts with mxt (By similarity).</text>
</comment>
<comment type="subcellular location">
    <subcellularLocation>
        <location evidence="2">Cytoplasm</location>
    </subcellularLocation>
</comment>
<comment type="similarity">
    <text evidence="2">Belongs to the eIF-3 subunit E family.</text>
</comment>
<evidence type="ECO:0000250" key="1">
    <source>
        <dbReference type="UniProtKB" id="O77410"/>
    </source>
</evidence>
<evidence type="ECO:0000255" key="2">
    <source>
        <dbReference type="HAMAP-Rule" id="MF_03004"/>
    </source>
</evidence>
<evidence type="ECO:0000255" key="3">
    <source>
        <dbReference type="PROSITE-ProRule" id="PRU01185"/>
    </source>
</evidence>
<keyword id="KW-0963">Cytoplasm</keyword>
<keyword id="KW-0396">Initiation factor</keyword>
<keyword id="KW-0648">Protein biosynthesis</keyword>
<gene>
    <name type="primary">eIF3-S6</name>
    <name type="synonym">Int6</name>
    <name type="ORF">GG15850</name>
</gene>
<reference key="1">
    <citation type="journal article" date="2007" name="Nature">
        <title>Evolution of genes and genomes on the Drosophila phylogeny.</title>
        <authorList>
            <consortium name="Drosophila 12 genomes consortium"/>
        </authorList>
    </citation>
    <scope>NUCLEOTIDE SEQUENCE [LARGE SCALE GENOMIC DNA]</scope>
    <source>
        <strain>Tucson 14021-0224.01</strain>
    </source>
</reference>
<proteinExistence type="inferred from homology"/>